<protein>
    <recommendedName>
        <fullName evidence="14">Very-long-chain 3-oxoacyl-CoA reductase</fullName>
        <ecNumber evidence="4">1.1.1.330</ecNumber>
    </recommendedName>
    <alternativeName>
        <fullName evidence="13">17-beta-hydroxysteroid dehydrogenase 12</fullName>
        <shortName evidence="13">17-beta-HSD 12</shortName>
    </alternativeName>
    <alternativeName>
        <fullName evidence="11">3-ketoacyl-CoA reductase</fullName>
        <shortName evidence="11">KAR</shortName>
    </alternativeName>
    <alternativeName>
        <fullName evidence="13">Estradiol 17-beta-dehydrogenase 12</fullName>
        <ecNumber evidence="7">1.1.1.62</ecNumber>
    </alternativeName>
    <alternativeName>
        <fullName>Short chain dehydrogenase/reductase family 12C member 1</fullName>
    </alternativeName>
</protein>
<feature type="chain" id="PRO_0000248368" description="Very-long-chain 3-oxoacyl-CoA reductase">
    <location>
        <begin position="1"/>
        <end position="312"/>
    </location>
</feature>
<feature type="transmembrane region" description="Helical" evidence="2">
    <location>
        <begin position="4"/>
        <end position="24"/>
    </location>
</feature>
<feature type="transmembrane region" description="Helical" evidence="2">
    <location>
        <begin position="182"/>
        <end position="202"/>
    </location>
</feature>
<feature type="transmembrane region" description="Helical" evidence="2">
    <location>
        <begin position="271"/>
        <end position="291"/>
    </location>
</feature>
<feature type="short sequence motif" description="Di-lysine motif">
    <location>
        <begin position="308"/>
        <end position="312"/>
    </location>
</feature>
<feature type="active site" description="Proton acceptor" evidence="3">
    <location>
        <position position="202"/>
    </location>
</feature>
<feature type="binding site" evidence="1">
    <location>
        <begin position="50"/>
        <end position="79"/>
    </location>
    <ligand>
        <name>NADP(+)</name>
        <dbReference type="ChEBI" id="CHEBI:58349"/>
    </ligand>
</feature>
<feature type="binding site" evidence="1">
    <location>
        <position position="189"/>
    </location>
    <ligand>
        <name>substrate</name>
    </ligand>
</feature>
<feature type="splice variant" id="VSP_056380" description="In isoform 2." evidence="12">
    <original>KEKF</original>
    <variation>SNYT</variation>
    <location>
        <begin position="95"/>
        <end position="98"/>
    </location>
</feature>
<feature type="splice variant" id="VSP_056381" description="In isoform 2." evidence="12">
    <location>
        <begin position="99"/>
        <end position="312"/>
    </location>
</feature>
<feature type="sequence variant" id="VAR_027277" description="In dbSNP:rs11555762." evidence="5 9 10">
    <original>S</original>
    <variation>L</variation>
    <location>
        <position position="280"/>
    </location>
</feature>
<feature type="mutagenesis site" description="No effect." evidence="7">
    <original>V</original>
    <variation>W</variation>
    <location>
        <position position="196"/>
    </location>
</feature>
<feature type="mutagenesis site" description="Allows the conversion of androstenedione to testosterone." evidence="7">
    <original>F</original>
    <variation>A</variation>
    <location>
        <position position="234"/>
    </location>
</feature>
<sequence length="312" mass="34324">MESALPAAGFLYWVGAGTVAYLALRISYSLFTALRVWGVGNEAGVGPGLGEWAVVTGSTDGIGKSYAEELAKHGMKVVLISRSKDKLDQVSSEIKEKFKVETRTIAVDFASEDIYDKIKTGLAGLEIGILVNNVGMSYEYPEYFLDVPDLDNVIKKMININILSVCKMTQLVLPGMVERSKGAILNISSGSGMLPVPLLTIYSATKTFVDFFSQCLHEEYRSKGVFVQSVLPYFVATKLAKIRKPTLDKPSPETFVKSAIKTVGLQSRTNGYLIHALMGSIISNLPSWIYLKIVMNMNKSTRAHYLKKTKKN</sequence>
<proteinExistence type="evidence at protein level"/>
<gene>
    <name evidence="15" type="primary">HSD17B12</name>
    <name type="synonym">SDR12C1</name>
</gene>
<dbReference type="EC" id="1.1.1.330" evidence="4"/>
<dbReference type="EC" id="1.1.1.62" evidence="7"/>
<dbReference type="EMBL" id="AF078850">
    <property type="protein sequence ID" value="AAD44482.1"/>
    <property type="molecule type" value="mRNA"/>
</dbReference>
<dbReference type="EMBL" id="AK027882">
    <property type="status" value="NOT_ANNOTATED_CDS"/>
    <property type="molecule type" value="mRNA"/>
</dbReference>
<dbReference type="EMBL" id="AK074952">
    <property type="protein sequence ID" value="BAG52039.1"/>
    <property type="molecule type" value="mRNA"/>
</dbReference>
<dbReference type="EMBL" id="AK075216">
    <property type="protein sequence ID" value="BAG52086.1"/>
    <property type="molecule type" value="mRNA"/>
</dbReference>
<dbReference type="EMBL" id="AK222881">
    <property type="protein sequence ID" value="BAD96601.1"/>
    <property type="molecule type" value="mRNA"/>
</dbReference>
<dbReference type="EMBL" id="AK292625">
    <property type="protein sequence ID" value="BAF85314.1"/>
    <property type="molecule type" value="mRNA"/>
</dbReference>
<dbReference type="EMBL" id="AC023085">
    <property type="status" value="NOT_ANNOTATED_CDS"/>
    <property type="molecule type" value="Genomic_DNA"/>
</dbReference>
<dbReference type="EMBL" id="AC068205">
    <property type="status" value="NOT_ANNOTATED_CDS"/>
    <property type="molecule type" value="Genomic_DNA"/>
</dbReference>
<dbReference type="EMBL" id="AC087521">
    <property type="status" value="NOT_ANNOTATED_CDS"/>
    <property type="molecule type" value="Genomic_DNA"/>
</dbReference>
<dbReference type="EMBL" id="CH471064">
    <property type="protein sequence ID" value="EAW68082.1"/>
    <property type="molecule type" value="Genomic_DNA"/>
</dbReference>
<dbReference type="EMBL" id="CH471064">
    <property type="protein sequence ID" value="EAW68087.1"/>
    <property type="molecule type" value="Genomic_DNA"/>
</dbReference>
<dbReference type="EMBL" id="CH471064">
    <property type="protein sequence ID" value="EAW68088.1"/>
    <property type="molecule type" value="Genomic_DNA"/>
</dbReference>
<dbReference type="EMBL" id="BC012043">
    <property type="protein sequence ID" value="AAH12043.1"/>
    <property type="molecule type" value="mRNA"/>
</dbReference>
<dbReference type="EMBL" id="BC012536">
    <property type="protein sequence ID" value="AAH12536.1"/>
    <property type="molecule type" value="mRNA"/>
</dbReference>
<dbReference type="CCDS" id="CCDS7905.1">
    <molecule id="Q53GQ0-1"/>
</dbReference>
<dbReference type="RefSeq" id="NP_057226.1">
    <molecule id="Q53GQ0-1"/>
    <property type="nucleotide sequence ID" value="NM_016142.3"/>
</dbReference>
<dbReference type="SMR" id="Q53GQ0"/>
<dbReference type="BioGRID" id="119328">
    <property type="interactions" value="238"/>
</dbReference>
<dbReference type="FunCoup" id="Q53GQ0">
    <property type="interactions" value="2052"/>
</dbReference>
<dbReference type="IntAct" id="Q53GQ0">
    <property type="interactions" value="99"/>
</dbReference>
<dbReference type="MINT" id="Q53GQ0"/>
<dbReference type="STRING" id="9606.ENSP00000278353"/>
<dbReference type="ChEMBL" id="CHEMBL5998"/>
<dbReference type="SwissLipids" id="SLP:000000433"/>
<dbReference type="GlyGen" id="Q53GQ0">
    <property type="glycosylation" value="2 sites, 1 N-linked glycan (1 site), 1 O-linked glycan (1 site)"/>
</dbReference>
<dbReference type="iPTMnet" id="Q53GQ0"/>
<dbReference type="PhosphoSitePlus" id="Q53GQ0"/>
<dbReference type="SwissPalm" id="Q53GQ0"/>
<dbReference type="BioMuta" id="HSD17B12"/>
<dbReference type="DMDM" id="158931120"/>
<dbReference type="jPOST" id="Q53GQ0"/>
<dbReference type="MassIVE" id="Q53GQ0"/>
<dbReference type="PaxDb" id="9606-ENSP00000278353"/>
<dbReference type="PeptideAtlas" id="Q53GQ0"/>
<dbReference type="ProteomicsDB" id="62486">
    <molecule id="Q53GQ0-1"/>
</dbReference>
<dbReference type="ProteomicsDB" id="76390"/>
<dbReference type="Pumba" id="Q53GQ0"/>
<dbReference type="Antibodypedia" id="3090">
    <property type="antibodies" value="198 antibodies from 24 providers"/>
</dbReference>
<dbReference type="DNASU" id="51144"/>
<dbReference type="Ensembl" id="ENST00000278353.10">
    <molecule id="Q53GQ0-1"/>
    <property type="protein sequence ID" value="ENSP00000278353.4"/>
    <property type="gene ID" value="ENSG00000149084.13"/>
</dbReference>
<dbReference type="Ensembl" id="ENST00000395700.4">
    <molecule id="Q53GQ0-2"/>
    <property type="protein sequence ID" value="ENSP00000379052.4"/>
    <property type="gene ID" value="ENSG00000149084.13"/>
</dbReference>
<dbReference type="GeneID" id="51144"/>
<dbReference type="KEGG" id="hsa:51144"/>
<dbReference type="MANE-Select" id="ENST00000278353.10">
    <property type="protein sequence ID" value="ENSP00000278353.4"/>
    <property type="RefSeq nucleotide sequence ID" value="NM_016142.3"/>
    <property type="RefSeq protein sequence ID" value="NP_057226.1"/>
</dbReference>
<dbReference type="UCSC" id="uc001mxq.5">
    <molecule id="Q53GQ0-1"/>
    <property type="organism name" value="human"/>
</dbReference>
<dbReference type="AGR" id="HGNC:18646"/>
<dbReference type="CTD" id="51144"/>
<dbReference type="DisGeNET" id="51144"/>
<dbReference type="GeneCards" id="HSD17B12"/>
<dbReference type="HGNC" id="HGNC:18646">
    <property type="gene designation" value="HSD17B12"/>
</dbReference>
<dbReference type="HPA" id="ENSG00000149084">
    <property type="expression patterns" value="Low tissue specificity"/>
</dbReference>
<dbReference type="MIM" id="609574">
    <property type="type" value="gene"/>
</dbReference>
<dbReference type="neXtProt" id="NX_Q53GQ0"/>
<dbReference type="OpenTargets" id="ENSG00000149084"/>
<dbReference type="PharmGKB" id="PA38618"/>
<dbReference type="VEuPathDB" id="HostDB:ENSG00000149084"/>
<dbReference type="eggNOG" id="KOG1014">
    <property type="taxonomic scope" value="Eukaryota"/>
</dbReference>
<dbReference type="GeneTree" id="ENSGT00940000154860"/>
<dbReference type="HOGENOM" id="CLU_010194_38_0_1"/>
<dbReference type="InParanoid" id="Q53GQ0"/>
<dbReference type="OMA" id="LVAPGMM"/>
<dbReference type="OrthoDB" id="5545019at2759"/>
<dbReference type="PAN-GO" id="Q53GQ0">
    <property type="GO annotations" value="2 GO annotations based on evolutionary models"/>
</dbReference>
<dbReference type="PhylomeDB" id="Q53GQ0"/>
<dbReference type="TreeFam" id="TF314591"/>
<dbReference type="BioCyc" id="MetaCyc:HS07581-MONOMER"/>
<dbReference type="BRENDA" id="1.1.1.62">
    <property type="organism ID" value="2681"/>
</dbReference>
<dbReference type="PathwayCommons" id="Q53GQ0"/>
<dbReference type="Reactome" id="R-HSA-193048">
    <property type="pathway name" value="Androgen biosynthesis"/>
</dbReference>
<dbReference type="Reactome" id="R-HSA-75876">
    <property type="pathway name" value="Synthesis of very long-chain fatty acyl-CoAs"/>
</dbReference>
<dbReference type="SABIO-RK" id="Q53GQ0"/>
<dbReference type="SignaLink" id="Q53GQ0"/>
<dbReference type="UniPathway" id="UPA00094"/>
<dbReference type="UniPathway" id="UPA00769"/>
<dbReference type="BioGRID-ORCS" id="51144">
    <property type="hits" value="379 hits in 1176 CRISPR screens"/>
</dbReference>
<dbReference type="CD-CODE" id="FB4E32DD">
    <property type="entry name" value="Presynaptic clusters and postsynaptic densities"/>
</dbReference>
<dbReference type="ChiTaRS" id="HSD17B12">
    <property type="organism name" value="human"/>
</dbReference>
<dbReference type="GeneWiki" id="HSD17B12"/>
<dbReference type="GenomeRNAi" id="51144"/>
<dbReference type="Pharos" id="Q53GQ0">
    <property type="development level" value="Tbio"/>
</dbReference>
<dbReference type="PRO" id="PR:Q53GQ0"/>
<dbReference type="Proteomes" id="UP000005640">
    <property type="component" value="Chromosome 11"/>
</dbReference>
<dbReference type="RNAct" id="Q53GQ0">
    <property type="molecule type" value="protein"/>
</dbReference>
<dbReference type="Bgee" id="ENSG00000149084">
    <property type="expression patterns" value="Expressed in endothelial cell and 205 other cell types or tissues"/>
</dbReference>
<dbReference type="ExpressionAtlas" id="Q53GQ0">
    <property type="expression patterns" value="baseline and differential"/>
</dbReference>
<dbReference type="GO" id="GO:0005783">
    <property type="term" value="C:endoplasmic reticulum"/>
    <property type="evidence" value="ECO:0000318"/>
    <property type="project" value="GO_Central"/>
</dbReference>
<dbReference type="GO" id="GO:0005789">
    <property type="term" value="C:endoplasmic reticulum membrane"/>
    <property type="evidence" value="ECO:0000304"/>
    <property type="project" value="Reactome"/>
</dbReference>
<dbReference type="GO" id="GO:0031012">
    <property type="term" value="C:extracellular matrix"/>
    <property type="evidence" value="ECO:0007669"/>
    <property type="project" value="Ensembl"/>
</dbReference>
<dbReference type="GO" id="GO:0009923">
    <property type="term" value="C:fatty acid elongase complex"/>
    <property type="evidence" value="ECO:0000314"/>
    <property type="project" value="UniProtKB"/>
</dbReference>
<dbReference type="GO" id="GO:0005518">
    <property type="term" value="F:collagen binding"/>
    <property type="evidence" value="ECO:0007669"/>
    <property type="project" value="Ensembl"/>
</dbReference>
<dbReference type="GO" id="GO:0004303">
    <property type="term" value="F:estradiol 17-beta-dehydrogenase [NAD(P)+] activity"/>
    <property type="evidence" value="ECO:0007669"/>
    <property type="project" value="UniProtKB-EC"/>
</dbReference>
<dbReference type="GO" id="GO:0001968">
    <property type="term" value="F:fibronectin binding"/>
    <property type="evidence" value="ECO:0007669"/>
    <property type="project" value="Ensembl"/>
</dbReference>
<dbReference type="GO" id="GO:0008201">
    <property type="term" value="F:heparin binding"/>
    <property type="evidence" value="ECO:0007669"/>
    <property type="project" value="Ensembl"/>
</dbReference>
<dbReference type="GO" id="GO:0016491">
    <property type="term" value="F:oxidoreductase activity"/>
    <property type="evidence" value="ECO:0000318"/>
    <property type="project" value="GO_Central"/>
</dbReference>
<dbReference type="GO" id="GO:0141040">
    <property type="term" value="F:very-long-chain 3-oxoacyl-CoA reductase activity"/>
    <property type="evidence" value="ECO:0000314"/>
    <property type="project" value="UniProtKB"/>
</dbReference>
<dbReference type="GO" id="GO:0006703">
    <property type="term" value="P:estrogen biosynthetic process"/>
    <property type="evidence" value="ECO:0007669"/>
    <property type="project" value="UniProtKB-UniPathway"/>
</dbReference>
<dbReference type="GO" id="GO:0030198">
    <property type="term" value="P:extracellular matrix organization"/>
    <property type="evidence" value="ECO:0007669"/>
    <property type="project" value="Ensembl"/>
</dbReference>
<dbReference type="GO" id="GO:0019367">
    <property type="term" value="P:fatty acid elongation, saturated fatty acid"/>
    <property type="evidence" value="ECO:0000314"/>
    <property type="project" value="UniProtKB"/>
</dbReference>
<dbReference type="GO" id="GO:0035338">
    <property type="term" value="P:long-chain fatty-acyl-CoA biosynthetic process"/>
    <property type="evidence" value="ECO:0000304"/>
    <property type="project" value="Reactome"/>
</dbReference>
<dbReference type="GO" id="GO:0010811">
    <property type="term" value="P:positive regulation of cell-substrate adhesion"/>
    <property type="evidence" value="ECO:0007669"/>
    <property type="project" value="Ensembl"/>
</dbReference>
<dbReference type="CDD" id="cd05356">
    <property type="entry name" value="17beta-HSD1_like_SDR_c"/>
    <property type="match status" value="1"/>
</dbReference>
<dbReference type="FunFam" id="3.40.50.720:FF:000137">
    <property type="entry name" value="Hydroxysteroid (17-beta) dehydrogenase 3"/>
    <property type="match status" value="1"/>
</dbReference>
<dbReference type="Gene3D" id="3.40.50.720">
    <property type="entry name" value="NAD(P)-binding Rossmann-like Domain"/>
    <property type="match status" value="1"/>
</dbReference>
<dbReference type="InterPro" id="IPR036291">
    <property type="entry name" value="NAD(P)-bd_dom_sf"/>
</dbReference>
<dbReference type="InterPro" id="IPR020904">
    <property type="entry name" value="Sc_DH/Rdtase_CS"/>
</dbReference>
<dbReference type="InterPro" id="IPR002347">
    <property type="entry name" value="SDR_fam"/>
</dbReference>
<dbReference type="InterPro" id="IPR051019">
    <property type="entry name" value="VLCFA-Steroid_DH"/>
</dbReference>
<dbReference type="PANTHER" id="PTHR43899">
    <property type="entry name" value="RH59310P"/>
    <property type="match status" value="1"/>
</dbReference>
<dbReference type="PANTHER" id="PTHR43899:SF14">
    <property type="entry name" value="VERY-LONG-CHAIN 3-OXOACYL-COA REDUCTASE"/>
    <property type="match status" value="1"/>
</dbReference>
<dbReference type="Pfam" id="PF00106">
    <property type="entry name" value="adh_short"/>
    <property type="match status" value="1"/>
</dbReference>
<dbReference type="PIRSF" id="PIRSF000126">
    <property type="entry name" value="11-beta-HSD1"/>
    <property type="match status" value="1"/>
</dbReference>
<dbReference type="PRINTS" id="PR00081">
    <property type="entry name" value="GDHRDH"/>
</dbReference>
<dbReference type="PRINTS" id="PR00080">
    <property type="entry name" value="SDRFAMILY"/>
</dbReference>
<dbReference type="SUPFAM" id="SSF51735">
    <property type="entry name" value="NAD(P)-binding Rossmann-fold domains"/>
    <property type="match status" value="1"/>
</dbReference>
<dbReference type="PROSITE" id="PS00061">
    <property type="entry name" value="ADH_SHORT"/>
    <property type="match status" value="1"/>
</dbReference>
<organism>
    <name type="scientific">Homo sapiens</name>
    <name type="common">Human</name>
    <dbReference type="NCBI Taxonomy" id="9606"/>
    <lineage>
        <taxon>Eukaryota</taxon>
        <taxon>Metazoa</taxon>
        <taxon>Chordata</taxon>
        <taxon>Craniata</taxon>
        <taxon>Vertebrata</taxon>
        <taxon>Euteleostomi</taxon>
        <taxon>Mammalia</taxon>
        <taxon>Eutheria</taxon>
        <taxon>Euarchontoglires</taxon>
        <taxon>Primates</taxon>
        <taxon>Haplorrhini</taxon>
        <taxon>Catarrhini</taxon>
        <taxon>Hominidae</taxon>
        <taxon>Homo</taxon>
    </lineage>
</organism>
<reference key="1">
    <citation type="submission" date="1998-07" db="EMBL/GenBank/DDBJ databases">
        <title>Human steroid dehydrogenase homologue, complete cds.</title>
        <authorList>
            <person name="Liu T."/>
            <person name="Zhang J."/>
            <person name="Fu G."/>
            <person name="Zhang Q."/>
            <person name="Ye M."/>
            <person name="Zhou J."/>
            <person name="Wu J."/>
            <person name="Shen Y."/>
            <person name="Yu M."/>
            <person name="Chen S."/>
            <person name="Mao M."/>
            <person name="Chen Z."/>
        </authorList>
    </citation>
    <scope>NUCLEOTIDE SEQUENCE [MRNA] (ISOFORM 1)</scope>
</reference>
<reference key="2">
    <citation type="journal article" date="2004" name="Nat. Genet.">
        <title>Complete sequencing and characterization of 21,243 full-length human cDNAs.</title>
        <authorList>
            <person name="Ota T."/>
            <person name="Suzuki Y."/>
            <person name="Nishikawa T."/>
            <person name="Otsuki T."/>
            <person name="Sugiyama T."/>
            <person name="Irie R."/>
            <person name="Wakamatsu A."/>
            <person name="Hayashi K."/>
            <person name="Sato H."/>
            <person name="Nagai K."/>
            <person name="Kimura K."/>
            <person name="Makita H."/>
            <person name="Sekine M."/>
            <person name="Obayashi M."/>
            <person name="Nishi T."/>
            <person name="Shibahara T."/>
            <person name="Tanaka T."/>
            <person name="Ishii S."/>
            <person name="Yamamoto J."/>
            <person name="Saito K."/>
            <person name="Kawai Y."/>
            <person name="Isono Y."/>
            <person name="Nakamura Y."/>
            <person name="Nagahari K."/>
            <person name="Murakami K."/>
            <person name="Yasuda T."/>
            <person name="Iwayanagi T."/>
            <person name="Wagatsuma M."/>
            <person name="Shiratori A."/>
            <person name="Sudo H."/>
            <person name="Hosoiri T."/>
            <person name="Kaku Y."/>
            <person name="Kodaira H."/>
            <person name="Kondo H."/>
            <person name="Sugawara M."/>
            <person name="Takahashi M."/>
            <person name="Kanda K."/>
            <person name="Yokoi T."/>
            <person name="Furuya T."/>
            <person name="Kikkawa E."/>
            <person name="Omura Y."/>
            <person name="Abe K."/>
            <person name="Kamihara K."/>
            <person name="Katsuta N."/>
            <person name="Sato K."/>
            <person name="Tanikawa M."/>
            <person name="Yamazaki M."/>
            <person name="Ninomiya K."/>
            <person name="Ishibashi T."/>
            <person name="Yamashita H."/>
            <person name="Murakawa K."/>
            <person name="Fujimori K."/>
            <person name="Tanai H."/>
            <person name="Kimata M."/>
            <person name="Watanabe M."/>
            <person name="Hiraoka S."/>
            <person name="Chiba Y."/>
            <person name="Ishida S."/>
            <person name="Ono Y."/>
            <person name="Takiguchi S."/>
            <person name="Watanabe S."/>
            <person name="Yosida M."/>
            <person name="Hotuta T."/>
            <person name="Kusano J."/>
            <person name="Kanehori K."/>
            <person name="Takahashi-Fujii A."/>
            <person name="Hara H."/>
            <person name="Tanase T.-O."/>
            <person name="Nomura Y."/>
            <person name="Togiya S."/>
            <person name="Komai F."/>
            <person name="Hara R."/>
            <person name="Takeuchi K."/>
            <person name="Arita M."/>
            <person name="Imose N."/>
            <person name="Musashino K."/>
            <person name="Yuuki H."/>
            <person name="Oshima A."/>
            <person name="Sasaki N."/>
            <person name="Aotsuka S."/>
            <person name="Yoshikawa Y."/>
            <person name="Matsunawa H."/>
            <person name="Ichihara T."/>
            <person name="Shiohata N."/>
            <person name="Sano S."/>
            <person name="Moriya S."/>
            <person name="Momiyama H."/>
            <person name="Satoh N."/>
            <person name="Takami S."/>
            <person name="Terashima Y."/>
            <person name="Suzuki O."/>
            <person name="Nakagawa S."/>
            <person name="Senoh A."/>
            <person name="Mizoguchi H."/>
            <person name="Goto Y."/>
            <person name="Shimizu F."/>
            <person name="Wakebe H."/>
            <person name="Hishigaki H."/>
            <person name="Watanabe T."/>
            <person name="Sugiyama A."/>
            <person name="Takemoto M."/>
            <person name="Kawakami B."/>
            <person name="Yamazaki M."/>
            <person name="Watanabe K."/>
            <person name="Kumagai A."/>
            <person name="Itakura S."/>
            <person name="Fukuzumi Y."/>
            <person name="Fujimori Y."/>
            <person name="Komiyama M."/>
            <person name="Tashiro H."/>
            <person name="Tanigami A."/>
            <person name="Fujiwara T."/>
            <person name="Ono T."/>
            <person name="Yamada K."/>
            <person name="Fujii Y."/>
            <person name="Ozaki K."/>
            <person name="Hirao M."/>
            <person name="Ohmori Y."/>
            <person name="Kawabata A."/>
            <person name="Hikiji T."/>
            <person name="Kobatake N."/>
            <person name="Inagaki H."/>
            <person name="Ikema Y."/>
            <person name="Okamoto S."/>
            <person name="Okitani R."/>
            <person name="Kawakami T."/>
            <person name="Noguchi S."/>
            <person name="Itoh T."/>
            <person name="Shigeta K."/>
            <person name="Senba T."/>
            <person name="Matsumura K."/>
            <person name="Nakajima Y."/>
            <person name="Mizuno T."/>
            <person name="Morinaga M."/>
            <person name="Sasaki M."/>
            <person name="Togashi T."/>
            <person name="Oyama M."/>
            <person name="Hata H."/>
            <person name="Watanabe M."/>
            <person name="Komatsu T."/>
            <person name="Mizushima-Sugano J."/>
            <person name="Satoh T."/>
            <person name="Shirai Y."/>
            <person name="Takahashi Y."/>
            <person name="Nakagawa K."/>
            <person name="Okumura K."/>
            <person name="Nagase T."/>
            <person name="Nomura N."/>
            <person name="Kikuchi H."/>
            <person name="Masuho Y."/>
            <person name="Yamashita R."/>
            <person name="Nakai K."/>
            <person name="Yada T."/>
            <person name="Nakamura Y."/>
            <person name="Ohara O."/>
            <person name="Isogai T."/>
            <person name="Sugano S."/>
        </authorList>
    </citation>
    <scope>NUCLEOTIDE SEQUENCE [LARGE SCALE MRNA] (ISOFORM 1)</scope>
    <scope>VARIANT LEU-280</scope>
    <source>
        <tissue>Liver</tissue>
        <tissue>Placenta</tissue>
        <tissue>Thymus</tissue>
        <tissue>Thyroid</tissue>
    </source>
</reference>
<reference key="3">
    <citation type="submission" date="2005-04" db="EMBL/GenBank/DDBJ databases">
        <authorList>
            <person name="Suzuki Y."/>
            <person name="Sugano S."/>
            <person name="Totoki Y."/>
            <person name="Toyoda A."/>
            <person name="Takeda T."/>
            <person name="Sakaki Y."/>
            <person name="Tanaka A."/>
            <person name="Yokoyama S."/>
        </authorList>
    </citation>
    <scope>NUCLEOTIDE SEQUENCE [LARGE SCALE MRNA] (ISOFORM 1)</scope>
    <scope>VARIANT LEU-280</scope>
    <source>
        <tissue>Liver</tissue>
    </source>
</reference>
<reference key="4">
    <citation type="journal article" date="2006" name="Nature">
        <title>Human chromosome 11 DNA sequence and analysis including novel gene identification.</title>
        <authorList>
            <person name="Taylor T.D."/>
            <person name="Noguchi H."/>
            <person name="Totoki Y."/>
            <person name="Toyoda A."/>
            <person name="Kuroki Y."/>
            <person name="Dewar K."/>
            <person name="Lloyd C."/>
            <person name="Itoh T."/>
            <person name="Takeda T."/>
            <person name="Kim D.-W."/>
            <person name="She X."/>
            <person name="Barlow K.F."/>
            <person name="Bloom T."/>
            <person name="Bruford E."/>
            <person name="Chang J.L."/>
            <person name="Cuomo C.A."/>
            <person name="Eichler E."/>
            <person name="FitzGerald M.G."/>
            <person name="Jaffe D.B."/>
            <person name="LaButti K."/>
            <person name="Nicol R."/>
            <person name="Park H.-S."/>
            <person name="Seaman C."/>
            <person name="Sougnez C."/>
            <person name="Yang X."/>
            <person name="Zimmer A.R."/>
            <person name="Zody M.C."/>
            <person name="Birren B.W."/>
            <person name="Nusbaum C."/>
            <person name="Fujiyama A."/>
            <person name="Hattori M."/>
            <person name="Rogers J."/>
            <person name="Lander E.S."/>
            <person name="Sakaki Y."/>
        </authorList>
    </citation>
    <scope>NUCLEOTIDE SEQUENCE [LARGE SCALE GENOMIC DNA]</scope>
</reference>
<reference key="5">
    <citation type="submission" date="2005-09" db="EMBL/GenBank/DDBJ databases">
        <authorList>
            <person name="Mural R.J."/>
            <person name="Istrail S."/>
            <person name="Sutton G.G."/>
            <person name="Florea L."/>
            <person name="Halpern A.L."/>
            <person name="Mobarry C.M."/>
            <person name="Lippert R."/>
            <person name="Walenz B."/>
            <person name="Shatkay H."/>
            <person name="Dew I."/>
            <person name="Miller J.R."/>
            <person name="Flanigan M.J."/>
            <person name="Edwards N.J."/>
            <person name="Bolanos R."/>
            <person name="Fasulo D."/>
            <person name="Halldorsson B.V."/>
            <person name="Hannenhalli S."/>
            <person name="Turner R."/>
            <person name="Yooseph S."/>
            <person name="Lu F."/>
            <person name="Nusskern D.R."/>
            <person name="Shue B.C."/>
            <person name="Zheng X.H."/>
            <person name="Zhong F."/>
            <person name="Delcher A.L."/>
            <person name="Huson D.H."/>
            <person name="Kravitz S.A."/>
            <person name="Mouchard L."/>
            <person name="Reinert K."/>
            <person name="Remington K.A."/>
            <person name="Clark A.G."/>
            <person name="Waterman M.S."/>
            <person name="Eichler E.E."/>
            <person name="Adams M.D."/>
            <person name="Hunkapiller M.W."/>
            <person name="Myers E.W."/>
            <person name="Venter J.C."/>
        </authorList>
    </citation>
    <scope>NUCLEOTIDE SEQUENCE [LARGE SCALE GENOMIC DNA]</scope>
    <scope>VARIANT LEU-280</scope>
</reference>
<reference key="6">
    <citation type="journal article" date="2004" name="Genome Res.">
        <title>The status, quality, and expansion of the NIH full-length cDNA project: the Mammalian Gene Collection (MGC).</title>
        <authorList>
            <consortium name="The MGC Project Team"/>
        </authorList>
    </citation>
    <scope>NUCLEOTIDE SEQUENCE [LARGE SCALE MRNA] (ISOFORMS 1 AND 2)</scope>
    <source>
        <tissue>Brain</tissue>
        <tissue>Pancreas</tissue>
    </source>
</reference>
<reference key="7">
    <citation type="submission" date="2005-06" db="UniProtKB">
        <authorList>
            <person name="Bienvenut W.V."/>
        </authorList>
    </citation>
    <scope>PROTEIN SEQUENCE OF 26-35; 65-72; 104-117; 157-179 AND 207-221</scope>
    <scope>IDENTIFICATION BY MASS SPECTROMETRY</scope>
    <source>
        <tissue>B-cell lymphoma</tissue>
    </source>
</reference>
<reference key="8">
    <citation type="journal article" date="2003" name="J. Biol. Chem.">
        <title>Identification of two mammalian reductases involved in the two-carbon fatty acyl elongation cascade.</title>
        <authorList>
            <person name="Moon Y.-A."/>
            <person name="Horton J.D."/>
        </authorList>
    </citation>
    <scope>FUNCTION</scope>
    <scope>CATALYTIC ACTIVITY</scope>
    <scope>PATHWAY</scope>
    <scope>SUBCELLULAR LOCATION</scope>
    <scope>TISSUE SPECIFICITY</scope>
</reference>
<reference key="9">
    <citation type="journal article" date="2005" name="Thromb. Haemost.">
        <title>Platelets express steroidogenic 17beta-hydroxysteroid dehydrogenases. Distinct profiles predict the essential thrombocythemic phenotype.</title>
        <authorList>
            <person name="Gnatenko D.V."/>
            <person name="Cupit L.D."/>
            <person name="Huang E.C."/>
            <person name="Dhundale A."/>
            <person name="Perrotta P.L."/>
            <person name="Bahou W.F."/>
        </authorList>
    </citation>
    <scope>TISSUE SPECIFICITY</scope>
</reference>
<reference key="10">
    <citation type="journal article" date="2006" name="Mol. Endocrinol.">
        <title>Characterization of type 12 17beta-hydroxysteroid dehydrogenase, an isoform of type 3 17beta-hydroxysteroid dehydrogenase responsible for estradiol formation in women.</title>
        <authorList>
            <person name="Luu-The V."/>
            <person name="Tremblay P."/>
            <person name="Labrie F."/>
        </authorList>
    </citation>
    <scope>FUNCTION</scope>
    <scope>CATALYTIC ACTIVITY</scope>
    <scope>PATHWAY</scope>
    <scope>BIOPHYSICOCHEMICAL PROPERTIES</scope>
    <scope>TISSUE SPECIFICITY</scope>
    <scope>MUTAGENESIS OF VAL-196 AND PHE-234</scope>
</reference>
<reference key="11">
    <citation type="journal article" date="2010" name="Proc. Natl. Acad. Sci. U.S.A.">
        <title>ELOVL1 production of C24 acyl-CoAs is linked to C24 sphingolipid synthesis.</title>
        <authorList>
            <person name="Ohno Y."/>
            <person name="Suto S."/>
            <person name="Yamanaka M."/>
            <person name="Mizutani Y."/>
            <person name="Mitsutake S."/>
            <person name="Igarashi Y."/>
            <person name="Sassa T."/>
            <person name="Kihara A."/>
        </authorList>
    </citation>
    <scope>INTERACTION WITH ELOVL1 AND LASS2</scope>
</reference>
<reference key="12">
    <citation type="journal article" date="2011" name="BMC Syst. Biol.">
        <title>Initial characterization of the human central proteome.</title>
        <authorList>
            <person name="Burkard T.R."/>
            <person name="Planyavsky M."/>
            <person name="Kaupe I."/>
            <person name="Breitwieser F.P."/>
            <person name="Buerckstuemmer T."/>
            <person name="Bennett K.L."/>
            <person name="Superti-Furga G."/>
            <person name="Colinge J."/>
        </authorList>
    </citation>
    <scope>IDENTIFICATION BY MASS SPECTROMETRY [LARGE SCALE ANALYSIS]</scope>
</reference>
<reference key="13">
    <citation type="journal article" date="2014" name="J. Proteomics">
        <title>An enzyme assisted RP-RPLC approach for in-depth analysis of human liver phosphoproteome.</title>
        <authorList>
            <person name="Bian Y."/>
            <person name="Song C."/>
            <person name="Cheng K."/>
            <person name="Dong M."/>
            <person name="Wang F."/>
            <person name="Huang J."/>
            <person name="Sun D."/>
            <person name="Wang L."/>
            <person name="Ye M."/>
            <person name="Zou H."/>
        </authorList>
    </citation>
    <scope>IDENTIFICATION BY MASS SPECTROMETRY [LARGE SCALE ANALYSIS]</scope>
    <source>
        <tissue>Liver</tissue>
    </source>
</reference>
<reference key="14">
    <citation type="journal article" date="2015" name="Proteomics">
        <title>N-terminome analysis of the human mitochondrial proteome.</title>
        <authorList>
            <person name="Vaca Jacome A.S."/>
            <person name="Rabilloud T."/>
            <person name="Schaeffer-Reiss C."/>
            <person name="Rompais M."/>
            <person name="Ayoub D."/>
            <person name="Lane L."/>
            <person name="Bairoch A."/>
            <person name="Van Dorsselaer A."/>
            <person name="Carapito C."/>
        </authorList>
    </citation>
    <scope>IDENTIFICATION BY MASS SPECTROMETRY [LARGE SCALE ANALYSIS]</scope>
</reference>
<comment type="function">
    <text evidence="4 7">Catalyzes the second of the four reactions of the long-chain fatty acids elongation cycle. This endoplasmic reticulum-bound enzymatic process, allows the addition of two carbons to the chain of long- and very long-chain fatty acids/VLCFAs per cycle. This enzyme has a 3-ketoacyl-CoA reductase activity, reducing 3-ketoacyl-CoA to 3-hydroxyacyl-CoA, within each cycle of fatty acid elongation. Thereby, it may participate in the production of VLCFAs of different chain lengths that are involved in multiple biological processes as precursors of membrane lipids and lipid mediators. May also catalyze the transformation of estrone (E1) into estradiol (E2) and play a role in estrogen formation.</text>
</comment>
<comment type="catalytic activity">
    <reaction evidence="4">
        <text>a very-long-chain (3R)-3-hydroxyacyl-CoA + NADP(+) = a very-long-chain 3-oxoacyl-CoA + NADPH + H(+)</text>
        <dbReference type="Rhea" id="RHEA:48680"/>
        <dbReference type="ChEBI" id="CHEBI:15378"/>
        <dbReference type="ChEBI" id="CHEBI:57783"/>
        <dbReference type="ChEBI" id="CHEBI:58349"/>
        <dbReference type="ChEBI" id="CHEBI:85440"/>
        <dbReference type="ChEBI" id="CHEBI:90725"/>
        <dbReference type="EC" id="1.1.1.330"/>
    </reaction>
</comment>
<comment type="catalytic activity">
    <reaction evidence="7">
        <text>17beta-estradiol + NAD(+) = estrone + NADH + H(+)</text>
        <dbReference type="Rhea" id="RHEA:24612"/>
        <dbReference type="ChEBI" id="CHEBI:15378"/>
        <dbReference type="ChEBI" id="CHEBI:16469"/>
        <dbReference type="ChEBI" id="CHEBI:17263"/>
        <dbReference type="ChEBI" id="CHEBI:57540"/>
        <dbReference type="ChEBI" id="CHEBI:57945"/>
        <dbReference type="EC" id="1.1.1.62"/>
    </reaction>
</comment>
<comment type="catalytic activity">
    <reaction evidence="7">
        <text>17beta-estradiol + NADP(+) = estrone + NADPH + H(+)</text>
        <dbReference type="Rhea" id="RHEA:24616"/>
        <dbReference type="ChEBI" id="CHEBI:15378"/>
        <dbReference type="ChEBI" id="CHEBI:16469"/>
        <dbReference type="ChEBI" id="CHEBI:17263"/>
        <dbReference type="ChEBI" id="CHEBI:57783"/>
        <dbReference type="ChEBI" id="CHEBI:58349"/>
        <dbReference type="EC" id="1.1.1.62"/>
    </reaction>
</comment>
<comment type="catalytic activity">
    <reaction evidence="4">
        <text>3-oxooctadecanoyl-CoA + NADPH + H(+) = (3R)-hydroxyoctadecanoyl-CoA + NADP(+)</text>
        <dbReference type="Rhea" id="RHEA:39151"/>
        <dbReference type="ChEBI" id="CHEBI:15378"/>
        <dbReference type="ChEBI" id="CHEBI:57783"/>
        <dbReference type="ChEBI" id="CHEBI:58349"/>
        <dbReference type="ChEBI" id="CHEBI:71407"/>
        <dbReference type="ChEBI" id="CHEBI:76374"/>
    </reaction>
</comment>
<comment type="catalytic activity">
    <reaction evidence="4">
        <text>(7Z,10Z,13Z,16Z)-3-oxodocosatetraenoyl-CoA + NADPH + H(+) = (3R)-hydroxy-(7Z,10Z,13Z,16Z)-docosatetraenoyl-CoA + NADP(+)</text>
        <dbReference type="Rhea" id="RHEA:39323"/>
        <dbReference type="ChEBI" id="CHEBI:15378"/>
        <dbReference type="ChEBI" id="CHEBI:57783"/>
        <dbReference type="ChEBI" id="CHEBI:58349"/>
        <dbReference type="ChEBI" id="CHEBI:73852"/>
        <dbReference type="ChEBI" id="CHEBI:76415"/>
    </reaction>
</comment>
<comment type="catalytic activity">
    <reaction evidence="4">
        <text>3-oxo-(7Z,10Z,13Z,16Z,19Z)-docosapentaenoyl-CoA + NADPH + H(+) = (3R)-hydroxy-(7Z,10Z,13Z,16Z,19Z)-docosapentaenoyl-CoA + NADP(+)</text>
        <dbReference type="Rhea" id="RHEA:39459"/>
        <dbReference type="ChEBI" id="CHEBI:15378"/>
        <dbReference type="ChEBI" id="CHEBI:57783"/>
        <dbReference type="ChEBI" id="CHEBI:58349"/>
        <dbReference type="ChEBI" id="CHEBI:73863"/>
        <dbReference type="ChEBI" id="CHEBI:76460"/>
    </reaction>
</comment>
<comment type="catalytic activity">
    <reaction evidence="4">
        <text>(8Z,11Z,14Z)-3-oxoeicosatrienoyl-CoA + NADPH + H(+) = (3R)-hydroxy-(8Z,11Z,14Z)-eicosatrienoyl-CoA + NADP(+)</text>
        <dbReference type="Rhea" id="RHEA:39311"/>
        <dbReference type="ChEBI" id="CHEBI:15378"/>
        <dbReference type="ChEBI" id="CHEBI:57783"/>
        <dbReference type="ChEBI" id="CHEBI:58349"/>
        <dbReference type="ChEBI" id="CHEBI:71481"/>
        <dbReference type="ChEBI" id="CHEBI:76411"/>
    </reaction>
</comment>
<comment type="biophysicochemical properties">
    <kinetics>
        <KM evidence="7">3.5 uM for estrone</KM>
    </kinetics>
</comment>
<comment type="pathway">
    <text evidence="4">Lipid metabolism; fatty acid biosynthesis.</text>
</comment>
<comment type="pathway">
    <text evidence="7">Steroid biosynthesis; estrogen biosynthesis.</text>
</comment>
<comment type="subunit">
    <text evidence="8">Interacts with ELOVL1 and LASS2.</text>
</comment>
<comment type="interaction">
    <interactant intactId="EBI-2963255">
        <id>Q53GQ0</id>
    </interactant>
    <interactant intactId="EBI-25837549">
        <id>P28329-3</id>
        <label>CHAT</label>
    </interactant>
    <organismsDiffer>false</organismsDiffer>
    <experiments>3</experiments>
</comment>
<comment type="interaction">
    <interactant intactId="EBI-2963255">
        <id>Q53GQ0</id>
    </interactant>
    <interactant intactId="EBI-348399">
        <id>P22607</id>
        <label>FGFR3</label>
    </interactant>
    <organismsDiffer>false</organismsDiffer>
    <experiments>4</experiments>
</comment>
<comment type="interaction">
    <interactant intactId="EBI-2963255">
        <id>Q53GQ0</id>
    </interactant>
    <interactant intactId="EBI-351506">
        <id>P06396</id>
        <label>GSN</label>
    </interactant>
    <organismsDiffer>false</organismsDiffer>
    <experiments>3</experiments>
</comment>
<comment type="interaction">
    <interactant intactId="EBI-2963255">
        <id>Q53GQ0</id>
    </interactant>
    <interactant intactId="EBI-350145">
        <id>P01112</id>
        <label>HRAS</label>
    </interactant>
    <organismsDiffer>false</organismsDiffer>
    <experiments>3</experiments>
</comment>
<comment type="interaction">
    <interactant intactId="EBI-2963255">
        <id>Q53GQ0</id>
    </interactant>
    <interactant intactId="EBI-741480">
        <id>Q9UMX0</id>
        <label>UBQLN1</label>
    </interactant>
    <organismsDiffer>false</organismsDiffer>
    <experiments>6</experiments>
</comment>
<comment type="interaction">
    <interactant intactId="EBI-2963255">
        <id>Q53GQ0</id>
    </interactant>
    <interactant intactId="EBI-10173939">
        <id>Q9UMX0-2</id>
        <label>UBQLN1</label>
    </interactant>
    <organismsDiffer>false</organismsDiffer>
    <experiments>3</experiments>
</comment>
<comment type="interaction">
    <interactant intactId="EBI-2963255">
        <id>Q53GQ0</id>
    </interactant>
    <interactant intactId="EBI-947187">
        <id>Q9UHD9</id>
        <label>UBQLN2</label>
    </interactant>
    <organismsDiffer>false</organismsDiffer>
    <experiments>3</experiments>
</comment>
<comment type="interaction">
    <interactant intactId="EBI-2963255">
        <id>Q53GQ0</id>
    </interactant>
    <interactant intactId="EBI-6863754">
        <id>PRO_0000037541</id>
        <dbReference type="UniProtKB" id="Q9WMX2"/>
    </interactant>
    <organismsDiffer>true</organismsDiffer>
    <experiments>2</experiments>
</comment>
<comment type="subcellular location">
    <subcellularLocation>
        <location evidence="4">Endoplasmic reticulum membrane</location>
        <topology evidence="4">Multi-pass membrane protein</topology>
    </subcellularLocation>
</comment>
<comment type="alternative products">
    <event type="alternative splicing"/>
    <isoform>
        <id>Q53GQ0-1</id>
        <name>1</name>
        <sequence type="displayed"/>
    </isoform>
    <isoform>
        <id>Q53GQ0-2</id>
        <name>2</name>
        <sequence type="described" ref="VSP_056380 VSP_056381"/>
    </isoform>
</comment>
<comment type="tissue specificity">
    <text evidence="4 6 7">Expressed in most tissues tested. Highly expressed in the ovary and mammary. Expressed in platelets.</text>
</comment>
<comment type="domain">
    <text evidence="1">The di-lysine motif confers endoplasmic reticulum localization for type I membrane proteins.</text>
</comment>
<comment type="similarity">
    <text evidence="14">Belongs to the short-chain dehydrogenases/reductases (SDR) family. 17-beta-HSD 3 subfamily.</text>
</comment>
<comment type="sequence caution" evidence="14">
    <conflict type="frameshift">
        <sequence resource="EMBL" id="AK027882"/>
    </conflict>
</comment>
<name>DHB12_HUMAN</name>
<evidence type="ECO:0000250" key="1"/>
<evidence type="ECO:0000255" key="2"/>
<evidence type="ECO:0000255" key="3">
    <source>
        <dbReference type="PROSITE-ProRule" id="PRU10001"/>
    </source>
</evidence>
<evidence type="ECO:0000269" key="4">
    <source>
    </source>
</evidence>
<evidence type="ECO:0000269" key="5">
    <source>
    </source>
</evidence>
<evidence type="ECO:0000269" key="6">
    <source>
    </source>
</evidence>
<evidence type="ECO:0000269" key="7">
    <source>
    </source>
</evidence>
<evidence type="ECO:0000269" key="8">
    <source>
    </source>
</evidence>
<evidence type="ECO:0000269" key="9">
    <source ref="3"/>
</evidence>
<evidence type="ECO:0000269" key="10">
    <source ref="5"/>
</evidence>
<evidence type="ECO:0000303" key="11">
    <source>
    </source>
</evidence>
<evidence type="ECO:0000303" key="12">
    <source>
    </source>
</evidence>
<evidence type="ECO:0000303" key="13">
    <source>
    </source>
</evidence>
<evidence type="ECO:0000305" key="14"/>
<evidence type="ECO:0000312" key="15">
    <source>
        <dbReference type="HGNC" id="HGNC:18646"/>
    </source>
</evidence>
<keyword id="KW-0025">Alternative splicing</keyword>
<keyword id="KW-0903">Direct protein sequencing</keyword>
<keyword id="KW-0256">Endoplasmic reticulum</keyword>
<keyword id="KW-0444">Lipid biosynthesis</keyword>
<keyword id="KW-0443">Lipid metabolism</keyword>
<keyword id="KW-0472">Membrane</keyword>
<keyword id="KW-0521">NADP</keyword>
<keyword id="KW-0560">Oxidoreductase</keyword>
<keyword id="KW-1267">Proteomics identification</keyword>
<keyword id="KW-1185">Reference proteome</keyword>
<keyword id="KW-0752">Steroid biosynthesis</keyword>
<keyword id="KW-0812">Transmembrane</keyword>
<keyword id="KW-1133">Transmembrane helix</keyword>
<accession>Q53GQ0</accession>
<accession>A8K9B0</accession>
<accession>D3DR23</accession>
<accession>Q96EA9</accession>
<accession>Q96JU2</accession>
<accession>Q9Y6G8</accession>